<evidence type="ECO:0000250" key="1"/>
<evidence type="ECO:0000250" key="2">
    <source>
        <dbReference type="UniProtKB" id="Q5DM57"/>
    </source>
</evidence>
<evidence type="ECO:0000305" key="3"/>
<evidence type="ECO:0000312" key="4">
    <source>
        <dbReference type="FlyBase" id="FBgn0035317"/>
    </source>
</evidence>
<gene>
    <name evidence="4" type="primary">Oseg2</name>
    <name type="synonym">osm-1</name>
    <name evidence="4" type="ORF">CG13809</name>
</gene>
<protein>
    <recommendedName>
        <fullName evidence="2">Intraflagellar transport protein 172 homolog</fullName>
    </recommendedName>
    <alternativeName>
        <fullName>Osmotic avoidance abnormal protein 1 homolog</fullName>
    </alternativeName>
    <alternativeName>
        <fullName>Outer segment 2</fullName>
    </alternativeName>
</protein>
<feature type="chain" id="PRO_0000328946" description="Intraflagellar transport protein 172 homolog">
    <location>
        <begin position="1"/>
        <end position="1754"/>
    </location>
</feature>
<feature type="repeat" description="WD 1">
    <location>
        <begin position="14"/>
        <end position="53"/>
    </location>
</feature>
<feature type="repeat" description="WD 2">
    <location>
        <begin position="64"/>
        <end position="103"/>
    </location>
</feature>
<feature type="repeat" description="WD 3">
    <location>
        <begin position="110"/>
        <end position="149"/>
    </location>
</feature>
<feature type="repeat" description="WD 4">
    <location>
        <begin position="151"/>
        <end position="190"/>
    </location>
</feature>
<feature type="repeat" description="WD 5">
    <location>
        <begin position="194"/>
        <end position="232"/>
    </location>
</feature>
<feature type="repeat" description="WD 6">
    <location>
        <begin position="283"/>
        <end position="322"/>
    </location>
</feature>
<feature type="repeat" description="WD 7">
    <location>
        <begin position="519"/>
        <end position="557"/>
    </location>
</feature>
<feature type="repeat" description="TPR 1">
    <location>
        <begin position="623"/>
        <end position="656"/>
    </location>
</feature>
<feature type="repeat" description="TPR 2">
    <location>
        <begin position="690"/>
        <end position="723"/>
    </location>
</feature>
<feature type="repeat" description="TPR 3">
    <location>
        <begin position="748"/>
        <end position="781"/>
    </location>
</feature>
<feature type="repeat" description="TPR 4">
    <location>
        <begin position="807"/>
        <end position="840"/>
    </location>
</feature>
<feature type="repeat" description="TPR 5">
    <location>
        <begin position="852"/>
        <end position="885"/>
    </location>
</feature>
<feature type="repeat" description="TPR 6">
    <location>
        <begin position="1041"/>
        <end position="1074"/>
    </location>
</feature>
<feature type="repeat" description="TPR 7">
    <location>
        <begin position="1140"/>
        <end position="1166"/>
    </location>
</feature>
<feature type="repeat" description="TPR 8">
    <location>
        <begin position="1167"/>
        <end position="1199"/>
    </location>
</feature>
<feature type="repeat" description="TPR 9">
    <location>
        <begin position="1211"/>
        <end position="1250"/>
    </location>
</feature>
<feature type="repeat" description="TPR 10">
    <location>
        <begin position="1282"/>
        <end position="1315"/>
    </location>
</feature>
<feature type="repeat" description="TPR 11">
    <location>
        <begin position="1698"/>
        <end position="1733"/>
    </location>
</feature>
<name>OSM1_DROME</name>
<organism>
    <name type="scientific">Drosophila melanogaster</name>
    <name type="common">Fruit fly</name>
    <dbReference type="NCBI Taxonomy" id="7227"/>
    <lineage>
        <taxon>Eukaryota</taxon>
        <taxon>Metazoa</taxon>
        <taxon>Ecdysozoa</taxon>
        <taxon>Arthropoda</taxon>
        <taxon>Hexapoda</taxon>
        <taxon>Insecta</taxon>
        <taxon>Pterygota</taxon>
        <taxon>Neoptera</taxon>
        <taxon>Endopterygota</taxon>
        <taxon>Diptera</taxon>
        <taxon>Brachycera</taxon>
        <taxon>Muscomorpha</taxon>
        <taxon>Ephydroidea</taxon>
        <taxon>Drosophilidae</taxon>
        <taxon>Drosophila</taxon>
        <taxon>Sophophora</taxon>
    </lineage>
</organism>
<keyword id="KW-0966">Cell projection</keyword>
<keyword id="KW-0969">Cilium</keyword>
<keyword id="KW-0217">Developmental protein</keyword>
<keyword id="KW-1185">Reference proteome</keyword>
<keyword id="KW-0677">Repeat</keyword>
<keyword id="KW-0802">TPR repeat</keyword>
<keyword id="KW-0853">WD repeat</keyword>
<proteinExistence type="inferred from homology"/>
<accession>Q9W040</accession>
<comment type="function">
    <text evidence="1">Required for the maintenance and formation of cilia.</text>
</comment>
<comment type="subcellular location">
    <subcellularLocation>
        <location evidence="1">Cell projection</location>
        <location evidence="1">Cilium</location>
    </subcellularLocation>
</comment>
<comment type="similarity">
    <text evidence="3">Belongs to the IFT172 family.</text>
</comment>
<sequence>MQLKYLRTLLEGQEQIQRIAGLAWSPNQQRLAIATADRHILLYDDAGERRDKFSTKPANPANGKNSYVIRGLAFSPDSTKLAVGQSDSIVYVYKLGESWNDKKVICNKFPQASAVTALIWLTSGSIIAGLEDGKVRALHSKSNKSQSLYGGDSICISLAANTKGTGFLSGHNDGTIIRYFMTDEATEPLGRVVQHPVPPFALAWPQGGFCAGGCDQRIVFYDSMGRQLRTFDHSRTEGEREFTVAACSPNGQAVAFGSFDRIRIFAWSPRQGAWSESATKEVACLYTLSSLLWRRDGARLALGSVSGAVLLFESVLRRTVWQDKFELIFVAPSQLLVRSLTEPSQALTIESQLGLEIDDVRIMGRDNYLVARTEESLILCDLTRNLSSEVPWTASGHHERFYFENPTVCLIFNVGELSLVEYGENSILGSVRTEFVNPHVISVRLNERGNAKENKKLAFLLDAKTICVVDLISRMTSGQISHETKIDWLELSETAHKLLFRDKKLRLILVDNYTGKKQTLLSNISFVQWVPQSDVVVAQSNSNLAIWYNIDLPEHVTMQSVRGEAIEVLRENGRTVVRSQDGPSEHNYQLDEGLVEFGTAVNDSDFGRAVHFLESLGDKPAAKAMWHNLALIALEDGNLRVAQRCYAALGNVSKAYYLAGMIQQADEFEESSGSPGILCPEVRAKLALLGSDLRTAERIYLEQGDIESALKMYQQLGMWDEAVALAERRGYNRIAELKQQHMDYLLSSEQQEKAGQVLEEQGDLQQAMSLYMKANKPARAARLALKTPHILQDEQVMLQVTEGLVRSELYELAGDIAHRLSRPEAALALYRKGGAYARALEIGRVVAPQEVTALEEEWGDWLVSRKQLDASINHYIEAGATQKALEAAVGAKQWRKAVQIAKVLDEPELIQRYAVDLAKHLAFAGDLDGAEDMLVRANLHKDAIELLNRHGKWERAYLIGEKHLKAEQVRELFVQLAGTLEEQGKFRDAEKVLIAVNEPDLAIAMYKRRELYDSMIRLVERYHKDLLDSTHLHLARQLESRGKLKNAEMHFVASGDWKSAVHMYCSSGRWEDGYRVAKLKGTEGASQQVAYMWAKSMPTEGAVRLLSKLGLLDTAVGFACDSGQFEFAMELCKFAGKPTDEVHLKIAMSLEDEGKFEAAEAEFLKANKPREAILMYQHAGDWQAALNVAENHLPDAVGEVLIGQASAALETSNYKDYEALLLRAHRPDLIIEHYKQESLYEDALRIAEEHYPSALNDLRRLQAQLQRGQAQAQAGEDAASISRSYLQKAAEFAKKEQFRKAAECLMQIDSSNAEDASTLERALLRAAEICNQFLEGQDAQELAQSLGPRLLAIKQIGPAAQLYLAADMPKQAVDVFIKTEQWSKARRLAKEIDPDLQLLAYVEQQQKASLKHEGNIEQLADIDIVSALDLLAEHGEWQRCLEKAKGLNPALLQKYVAVYAAQLIREGNCTTALGLYLSYGAPPIEAHFNIYTRIALDCLALREEQTERGTTWRQLRDFLFRLLQSLKATPAQSQTKFAASMEQFLLIAHYYATRAACKEVQALQPVALRLSLALLRHTDLLPVDKGFYEAGMDLRQAGREAEAFVMLNHYLDVCEAIEEGSGQLVDHSDLASTDFPSSVPLPEDIHLKNDPSLHEEVREWVLAVSMDQQVDQQLPTDDRGLYESSLGPNDLPCMLSGFPVRGRQPVTFQGSSNQVNRDVWSKFSVALKMSPGSGIADIISFTEKWQGAANYVMH</sequence>
<reference key="1">
    <citation type="journal article" date="2000" name="Science">
        <title>The genome sequence of Drosophila melanogaster.</title>
        <authorList>
            <person name="Adams M.D."/>
            <person name="Celniker S.E."/>
            <person name="Holt R.A."/>
            <person name="Evans C.A."/>
            <person name="Gocayne J.D."/>
            <person name="Amanatides P.G."/>
            <person name="Scherer S.E."/>
            <person name="Li P.W."/>
            <person name="Hoskins R.A."/>
            <person name="Galle R.F."/>
            <person name="George R.A."/>
            <person name="Lewis S.E."/>
            <person name="Richards S."/>
            <person name="Ashburner M."/>
            <person name="Henderson S.N."/>
            <person name="Sutton G.G."/>
            <person name="Wortman J.R."/>
            <person name="Yandell M.D."/>
            <person name="Zhang Q."/>
            <person name="Chen L.X."/>
            <person name="Brandon R.C."/>
            <person name="Rogers Y.-H.C."/>
            <person name="Blazej R.G."/>
            <person name="Champe M."/>
            <person name="Pfeiffer B.D."/>
            <person name="Wan K.H."/>
            <person name="Doyle C."/>
            <person name="Baxter E.G."/>
            <person name="Helt G."/>
            <person name="Nelson C.R."/>
            <person name="Miklos G.L.G."/>
            <person name="Abril J.F."/>
            <person name="Agbayani A."/>
            <person name="An H.-J."/>
            <person name="Andrews-Pfannkoch C."/>
            <person name="Baldwin D."/>
            <person name="Ballew R.M."/>
            <person name="Basu A."/>
            <person name="Baxendale J."/>
            <person name="Bayraktaroglu L."/>
            <person name="Beasley E.M."/>
            <person name="Beeson K.Y."/>
            <person name="Benos P.V."/>
            <person name="Berman B.P."/>
            <person name="Bhandari D."/>
            <person name="Bolshakov S."/>
            <person name="Borkova D."/>
            <person name="Botchan M.R."/>
            <person name="Bouck J."/>
            <person name="Brokstein P."/>
            <person name="Brottier P."/>
            <person name="Burtis K.C."/>
            <person name="Busam D.A."/>
            <person name="Butler H."/>
            <person name="Cadieu E."/>
            <person name="Center A."/>
            <person name="Chandra I."/>
            <person name="Cherry J.M."/>
            <person name="Cawley S."/>
            <person name="Dahlke C."/>
            <person name="Davenport L.B."/>
            <person name="Davies P."/>
            <person name="de Pablos B."/>
            <person name="Delcher A."/>
            <person name="Deng Z."/>
            <person name="Mays A.D."/>
            <person name="Dew I."/>
            <person name="Dietz S.M."/>
            <person name="Dodson K."/>
            <person name="Doup L.E."/>
            <person name="Downes M."/>
            <person name="Dugan-Rocha S."/>
            <person name="Dunkov B.C."/>
            <person name="Dunn P."/>
            <person name="Durbin K.J."/>
            <person name="Evangelista C.C."/>
            <person name="Ferraz C."/>
            <person name="Ferriera S."/>
            <person name="Fleischmann W."/>
            <person name="Fosler C."/>
            <person name="Gabrielian A.E."/>
            <person name="Garg N.S."/>
            <person name="Gelbart W.M."/>
            <person name="Glasser K."/>
            <person name="Glodek A."/>
            <person name="Gong F."/>
            <person name="Gorrell J.H."/>
            <person name="Gu Z."/>
            <person name="Guan P."/>
            <person name="Harris M."/>
            <person name="Harris N.L."/>
            <person name="Harvey D.A."/>
            <person name="Heiman T.J."/>
            <person name="Hernandez J.R."/>
            <person name="Houck J."/>
            <person name="Hostin D."/>
            <person name="Houston K.A."/>
            <person name="Howland T.J."/>
            <person name="Wei M.-H."/>
            <person name="Ibegwam C."/>
            <person name="Jalali M."/>
            <person name="Kalush F."/>
            <person name="Karpen G.H."/>
            <person name="Ke Z."/>
            <person name="Kennison J.A."/>
            <person name="Ketchum K.A."/>
            <person name="Kimmel B.E."/>
            <person name="Kodira C.D."/>
            <person name="Kraft C.L."/>
            <person name="Kravitz S."/>
            <person name="Kulp D."/>
            <person name="Lai Z."/>
            <person name="Lasko P."/>
            <person name="Lei Y."/>
            <person name="Levitsky A.A."/>
            <person name="Li J.H."/>
            <person name="Li Z."/>
            <person name="Liang Y."/>
            <person name="Lin X."/>
            <person name="Liu X."/>
            <person name="Mattei B."/>
            <person name="McIntosh T.C."/>
            <person name="McLeod M.P."/>
            <person name="McPherson D."/>
            <person name="Merkulov G."/>
            <person name="Milshina N.V."/>
            <person name="Mobarry C."/>
            <person name="Morris J."/>
            <person name="Moshrefi A."/>
            <person name="Mount S.M."/>
            <person name="Moy M."/>
            <person name="Murphy B."/>
            <person name="Murphy L."/>
            <person name="Muzny D.M."/>
            <person name="Nelson D.L."/>
            <person name="Nelson D.R."/>
            <person name="Nelson K.A."/>
            <person name="Nixon K."/>
            <person name="Nusskern D.R."/>
            <person name="Pacleb J.M."/>
            <person name="Palazzolo M."/>
            <person name="Pittman G.S."/>
            <person name="Pan S."/>
            <person name="Pollard J."/>
            <person name="Puri V."/>
            <person name="Reese M.G."/>
            <person name="Reinert K."/>
            <person name="Remington K."/>
            <person name="Saunders R.D.C."/>
            <person name="Scheeler F."/>
            <person name="Shen H."/>
            <person name="Shue B.C."/>
            <person name="Siden-Kiamos I."/>
            <person name="Simpson M."/>
            <person name="Skupski M.P."/>
            <person name="Smith T.J."/>
            <person name="Spier E."/>
            <person name="Spradling A.C."/>
            <person name="Stapleton M."/>
            <person name="Strong R."/>
            <person name="Sun E."/>
            <person name="Svirskas R."/>
            <person name="Tector C."/>
            <person name="Turner R."/>
            <person name="Venter E."/>
            <person name="Wang A.H."/>
            <person name="Wang X."/>
            <person name="Wang Z.-Y."/>
            <person name="Wassarman D.A."/>
            <person name="Weinstock G.M."/>
            <person name="Weissenbach J."/>
            <person name="Williams S.M."/>
            <person name="Woodage T."/>
            <person name="Worley K.C."/>
            <person name="Wu D."/>
            <person name="Yang S."/>
            <person name="Yao Q.A."/>
            <person name="Ye J."/>
            <person name="Yeh R.-F."/>
            <person name="Zaveri J.S."/>
            <person name="Zhan M."/>
            <person name="Zhang G."/>
            <person name="Zhao Q."/>
            <person name="Zheng L."/>
            <person name="Zheng X.H."/>
            <person name="Zhong F.N."/>
            <person name="Zhong W."/>
            <person name="Zhou X."/>
            <person name="Zhu S.C."/>
            <person name="Zhu X."/>
            <person name="Smith H.O."/>
            <person name="Gibbs R.A."/>
            <person name="Myers E.W."/>
            <person name="Rubin G.M."/>
            <person name="Venter J.C."/>
        </authorList>
    </citation>
    <scope>NUCLEOTIDE SEQUENCE [LARGE SCALE GENOMIC DNA]</scope>
    <source>
        <strain>Berkeley</strain>
    </source>
</reference>
<reference key="2">
    <citation type="journal article" date="2002" name="Genome Biol.">
        <title>Annotation of the Drosophila melanogaster euchromatic genome: a systematic review.</title>
        <authorList>
            <person name="Misra S."/>
            <person name="Crosby M.A."/>
            <person name="Mungall C.J."/>
            <person name="Matthews B.B."/>
            <person name="Campbell K.S."/>
            <person name="Hradecky P."/>
            <person name="Huang Y."/>
            <person name="Kaminker J.S."/>
            <person name="Millburn G.H."/>
            <person name="Prochnik S.E."/>
            <person name="Smith C.D."/>
            <person name="Tupy J.L."/>
            <person name="Whitfield E.J."/>
            <person name="Bayraktaroglu L."/>
            <person name="Berman B.P."/>
            <person name="Bettencourt B.R."/>
            <person name="Celniker S.E."/>
            <person name="de Grey A.D.N.J."/>
            <person name="Drysdale R.A."/>
            <person name="Harris N.L."/>
            <person name="Richter J."/>
            <person name="Russo S."/>
            <person name="Schroeder A.J."/>
            <person name="Shu S.Q."/>
            <person name="Stapleton M."/>
            <person name="Yamada C."/>
            <person name="Ashburner M."/>
            <person name="Gelbart W.M."/>
            <person name="Rubin G.M."/>
            <person name="Lewis S.E."/>
        </authorList>
    </citation>
    <scope>GENOME REANNOTATION</scope>
    <source>
        <strain>Berkeley</strain>
    </source>
</reference>
<dbReference type="EMBL" id="AE014296">
    <property type="protein sequence ID" value="AAF47619.3"/>
    <property type="molecule type" value="Genomic_DNA"/>
</dbReference>
<dbReference type="RefSeq" id="NP_647700.2">
    <property type="nucleotide sequence ID" value="NM_139443.2"/>
</dbReference>
<dbReference type="SMR" id="Q9W040"/>
<dbReference type="BioGRID" id="63798">
    <property type="interactions" value="2"/>
</dbReference>
<dbReference type="ComplexPortal" id="CPX-2704">
    <property type="entry name" value="Intraflagellar transport complex B"/>
</dbReference>
<dbReference type="FunCoup" id="Q9W040">
    <property type="interactions" value="99"/>
</dbReference>
<dbReference type="IntAct" id="Q9W040">
    <property type="interactions" value="7"/>
</dbReference>
<dbReference type="STRING" id="7227.FBpp0304907"/>
<dbReference type="PaxDb" id="7227-FBpp0304907"/>
<dbReference type="EnsemblMetazoa" id="FBtr0332661">
    <property type="protein sequence ID" value="FBpp0304907"/>
    <property type="gene ID" value="FBgn0035317"/>
</dbReference>
<dbReference type="GeneID" id="38282"/>
<dbReference type="KEGG" id="dme:Dmel_CG13809"/>
<dbReference type="AGR" id="FB:FBgn0035317"/>
<dbReference type="CTD" id="38282"/>
<dbReference type="FlyBase" id="FBgn0035317">
    <property type="gene designation" value="Oseg2"/>
</dbReference>
<dbReference type="VEuPathDB" id="VectorBase:FBgn0035317"/>
<dbReference type="eggNOG" id="KOG3616">
    <property type="taxonomic scope" value="Eukaryota"/>
</dbReference>
<dbReference type="GeneTree" id="ENSGT00940000153417"/>
<dbReference type="HOGENOM" id="CLU_002716_0_0_1"/>
<dbReference type="InParanoid" id="Q9W040"/>
<dbReference type="OMA" id="LKRTIWQ"/>
<dbReference type="OrthoDB" id="2186662at2759"/>
<dbReference type="PhylomeDB" id="Q9W040"/>
<dbReference type="Reactome" id="R-DME-5610787">
    <property type="pathway name" value="Hedgehog 'off' state"/>
</dbReference>
<dbReference type="SignaLink" id="Q9W040"/>
<dbReference type="BioGRID-ORCS" id="38282">
    <property type="hits" value="0 hits in 1 CRISPR screen"/>
</dbReference>
<dbReference type="GenomeRNAi" id="38282"/>
<dbReference type="PRO" id="PR:Q9W040"/>
<dbReference type="Proteomes" id="UP000000803">
    <property type="component" value="Chromosome 3L"/>
</dbReference>
<dbReference type="Bgee" id="FBgn0035317">
    <property type="expression patterns" value="Expressed in mechanosensory neuron (Drosophila) in insect leg and 5 other cell types or tissues"/>
</dbReference>
<dbReference type="GO" id="GO:0005930">
    <property type="term" value="C:axoneme"/>
    <property type="evidence" value="ECO:0000318"/>
    <property type="project" value="GO_Central"/>
</dbReference>
<dbReference type="GO" id="GO:0036064">
    <property type="term" value="C:ciliary basal body"/>
    <property type="evidence" value="ECO:0000318"/>
    <property type="project" value="GO_Central"/>
</dbReference>
<dbReference type="GO" id="GO:0005929">
    <property type="term" value="C:cilium"/>
    <property type="evidence" value="ECO:0000250"/>
    <property type="project" value="UniProtKB"/>
</dbReference>
<dbReference type="GO" id="GO:0030990">
    <property type="term" value="C:intraciliary transport particle"/>
    <property type="evidence" value="ECO:0000250"/>
    <property type="project" value="FlyBase"/>
</dbReference>
<dbReference type="GO" id="GO:0030992">
    <property type="term" value="C:intraciliary transport particle B"/>
    <property type="evidence" value="ECO:0000318"/>
    <property type="project" value="GO_Central"/>
</dbReference>
<dbReference type="GO" id="GO:0097730">
    <property type="term" value="C:non-motile cilium"/>
    <property type="evidence" value="ECO:0000314"/>
    <property type="project" value="FlyBase"/>
</dbReference>
<dbReference type="GO" id="GO:0060271">
    <property type="term" value="P:cilium assembly"/>
    <property type="evidence" value="ECO:0000270"/>
    <property type="project" value="FlyBase"/>
</dbReference>
<dbReference type="GO" id="GO:0042073">
    <property type="term" value="P:intraciliary transport"/>
    <property type="evidence" value="ECO:0000315"/>
    <property type="project" value="FlyBase"/>
</dbReference>
<dbReference type="GO" id="GO:1905515">
    <property type="term" value="P:non-motile cilium assembly"/>
    <property type="evidence" value="ECO:0000315"/>
    <property type="project" value="FlyBase"/>
</dbReference>
<dbReference type="FunFam" id="1.25.40.470:FF:000026">
    <property type="entry name" value="Intraflagellar transport protein 172 homolog"/>
    <property type="match status" value="1"/>
</dbReference>
<dbReference type="FunFam" id="1.25.40.470:FF:000027">
    <property type="entry name" value="Intraflagellar transport protein 172 homolog"/>
    <property type="match status" value="1"/>
</dbReference>
<dbReference type="FunFam" id="2.130.10.10:FF:001407">
    <property type="entry name" value="Intraflagellar transport protein 172 homolog"/>
    <property type="match status" value="1"/>
</dbReference>
<dbReference type="FunFam" id="1.25.40.470:FF:000021">
    <property type="entry name" value="Intraflagellar transport protein osm-1"/>
    <property type="match status" value="1"/>
</dbReference>
<dbReference type="Gene3D" id="1.25.40.470">
    <property type="match status" value="3"/>
</dbReference>
<dbReference type="Gene3D" id="2.130.10.10">
    <property type="entry name" value="YVTN repeat-like/Quinoprotein amine dehydrogenase"/>
    <property type="match status" value="2"/>
</dbReference>
<dbReference type="InterPro" id="IPR056168">
    <property type="entry name" value="TPR_IF140/IFT172/WDR19"/>
</dbReference>
<dbReference type="InterPro" id="IPR056157">
    <property type="entry name" value="TPR_IFT80_172_dom"/>
</dbReference>
<dbReference type="InterPro" id="IPR015943">
    <property type="entry name" value="WD40/YVTN_repeat-like_dom_sf"/>
</dbReference>
<dbReference type="InterPro" id="IPR036322">
    <property type="entry name" value="WD40_repeat_dom_sf"/>
</dbReference>
<dbReference type="InterPro" id="IPR001680">
    <property type="entry name" value="WD40_rpt"/>
</dbReference>
<dbReference type="PANTHER" id="PTHR15722">
    <property type="entry name" value="IFT140/172-RELATED"/>
    <property type="match status" value="1"/>
</dbReference>
<dbReference type="PANTHER" id="PTHR15722:SF2">
    <property type="entry name" value="INTRAFLAGELLAR TRANSPORT PROTEIN 172 HOMOLOG"/>
    <property type="match status" value="1"/>
</dbReference>
<dbReference type="Pfam" id="PF24762">
    <property type="entry name" value="TPR_IF140-IFT172"/>
    <property type="match status" value="1"/>
</dbReference>
<dbReference type="Pfam" id="PF23387">
    <property type="entry name" value="TPR_IFT80_172"/>
    <property type="match status" value="1"/>
</dbReference>
<dbReference type="Pfam" id="PF00400">
    <property type="entry name" value="WD40"/>
    <property type="match status" value="1"/>
</dbReference>
<dbReference type="SMART" id="SM00320">
    <property type="entry name" value="WD40"/>
    <property type="match status" value="7"/>
</dbReference>
<dbReference type="SUPFAM" id="SSF69322">
    <property type="entry name" value="Tricorn protease domain 2"/>
    <property type="match status" value="1"/>
</dbReference>
<dbReference type="SUPFAM" id="SSF50978">
    <property type="entry name" value="WD40 repeat-like"/>
    <property type="match status" value="1"/>
</dbReference>